<evidence type="ECO:0000250" key="1">
    <source>
        <dbReference type="UniProtKB" id="A0A0A1HA03"/>
    </source>
</evidence>
<evidence type="ECO:0000250" key="2">
    <source>
        <dbReference type="UniProtKB" id="P51094"/>
    </source>
</evidence>
<evidence type="ECO:0000269" key="3">
    <source>
    </source>
</evidence>
<evidence type="ECO:0000269" key="4">
    <source>
    </source>
</evidence>
<evidence type="ECO:0000269" key="5">
    <source>
    </source>
</evidence>
<evidence type="ECO:0000269" key="6">
    <source>
    </source>
</evidence>
<evidence type="ECO:0000303" key="7">
    <source>
    </source>
</evidence>
<evidence type="ECO:0000305" key="8"/>
<evidence type="ECO:0000312" key="9">
    <source>
        <dbReference type="Araport" id="AT5G26310"/>
    </source>
</evidence>
<evidence type="ECO:0000312" key="10">
    <source>
        <dbReference type="EMBL" id="AAC26233.1"/>
    </source>
</evidence>
<sequence>MHITKPHAAMFSSPGMGHVLPVIELAKRLSANHGFHVTVFVLETDAASVQSKLLNSTGVDIVNLPSPDISGLVDPNAHVVTKIGVIMREAVPTLRSKIVAMHQNPTALIIDLFGTDALCLAAELNMLTYVFIASNARYLGVSIYYPTLDEVIKEEHTVQRKPLTIPGCEPVRFEDIMDAYLVPDEPVYHDLVRHCLAYPKADGILVNTWEEMEPKSLKSLQDPKLLGRVARVPVYPVGPLCRPIQSSTTDHPVFDWLNKQPNESVLYISFGSGGSLTAQQLTELAWGLEESQQRFIWVVRPPVDGSSCSDYFSAKGGVTKDNTPEYLPEGFVTRTCDRGFMIPSWAPQAEILAHQAVGGFLTHCGWSSTLESVLCGVPMIAWPLFAEQNMNAALLSDELGISVRVDDPKEAISRSKIEAMVRKVMAEDEGEEMRRKVKKLRDTAEMSLSIHGGGSAHESLCRVTKECQRFLECVGDLGRGA</sequence>
<protein>
    <recommendedName>
        <fullName evidence="7">UDP-glycosyltransferase 72E3</fullName>
        <ecNumber evidence="4 6">2.4.1.111</ecNumber>
    </recommendedName>
    <alternativeName>
        <fullName evidence="8">Hydroxycinnamate 4-beta-glucosyltransferase UGT72E3</fullName>
        <ecNumber evidence="3 4 6">2.4.1.126</ecNumber>
    </alternativeName>
</protein>
<dbReference type="EC" id="2.4.1.111" evidence="4 6"/>
<dbReference type="EC" id="2.4.1.126" evidence="3 4 6"/>
<dbReference type="EMBL" id="AF077407">
    <property type="protein sequence ID" value="AAC26233.1"/>
    <property type="molecule type" value="Genomic_DNA"/>
</dbReference>
<dbReference type="EMBL" id="CP002688">
    <property type="protein sequence ID" value="AED93550.1"/>
    <property type="molecule type" value="Genomic_DNA"/>
</dbReference>
<dbReference type="EMBL" id="BT030376">
    <property type="protein sequence ID" value="ABO38789.1"/>
    <property type="molecule type" value="mRNA"/>
</dbReference>
<dbReference type="PIR" id="T01850">
    <property type="entry name" value="T01850"/>
</dbReference>
<dbReference type="RefSeq" id="NP_198003.1">
    <property type="nucleotide sequence ID" value="NM_122532.3"/>
</dbReference>
<dbReference type="SMR" id="O81498"/>
<dbReference type="FunCoup" id="O81498">
    <property type="interactions" value="416"/>
</dbReference>
<dbReference type="STRING" id="3702.O81498"/>
<dbReference type="CAZy" id="GT1">
    <property type="family name" value="Glycosyltransferase Family 1"/>
</dbReference>
<dbReference type="PaxDb" id="3702-AT5G26310.1"/>
<dbReference type="ProteomicsDB" id="228590"/>
<dbReference type="EnsemblPlants" id="AT5G26310.1">
    <property type="protein sequence ID" value="AT5G26310.1"/>
    <property type="gene ID" value="AT5G26310"/>
</dbReference>
<dbReference type="GeneID" id="832700"/>
<dbReference type="Gramene" id="AT5G26310.1">
    <property type="protein sequence ID" value="AT5G26310.1"/>
    <property type="gene ID" value="AT5G26310"/>
</dbReference>
<dbReference type="KEGG" id="ath:AT5G26310"/>
<dbReference type="Araport" id="AT5G26310"/>
<dbReference type="TAIR" id="AT5G26310">
    <property type="gene designation" value="UGT72E3"/>
</dbReference>
<dbReference type="eggNOG" id="KOG1192">
    <property type="taxonomic scope" value="Eukaryota"/>
</dbReference>
<dbReference type="HOGENOM" id="CLU_001724_3_0_1"/>
<dbReference type="InParanoid" id="O81498"/>
<dbReference type="OMA" id="SANHGFH"/>
<dbReference type="PhylomeDB" id="O81498"/>
<dbReference type="BioCyc" id="ARA:AT5G26310-MONOMER"/>
<dbReference type="BioCyc" id="MetaCyc:AT5G26310-MONOMER"/>
<dbReference type="SABIO-RK" id="O81498"/>
<dbReference type="PRO" id="PR:O81498"/>
<dbReference type="Proteomes" id="UP000006548">
    <property type="component" value="Chromosome 5"/>
</dbReference>
<dbReference type="ExpressionAtlas" id="O81498">
    <property type="expression patterns" value="baseline and differential"/>
</dbReference>
<dbReference type="GO" id="GO:0047209">
    <property type="term" value="F:coniferyl-alcohol glucosyltransferase activity"/>
    <property type="evidence" value="ECO:0000314"/>
    <property type="project" value="TAIR"/>
</dbReference>
<dbReference type="GO" id="GO:0047218">
    <property type="term" value="F:hydroxycinnamate 4-beta-glucosyltransferase activity"/>
    <property type="evidence" value="ECO:0007669"/>
    <property type="project" value="UniProtKB-EC"/>
</dbReference>
<dbReference type="CDD" id="cd03784">
    <property type="entry name" value="GT1_Gtf-like"/>
    <property type="match status" value="1"/>
</dbReference>
<dbReference type="FunFam" id="3.40.50.2000:FF:000051">
    <property type="entry name" value="Glycosyltransferase"/>
    <property type="match status" value="1"/>
</dbReference>
<dbReference type="FunFam" id="3.40.50.2000:FF:000054">
    <property type="entry name" value="Glycosyltransferase"/>
    <property type="match status" value="1"/>
</dbReference>
<dbReference type="Gene3D" id="3.40.50.2000">
    <property type="entry name" value="Glycogen Phosphorylase B"/>
    <property type="match status" value="2"/>
</dbReference>
<dbReference type="InterPro" id="IPR002213">
    <property type="entry name" value="UDP_glucos_trans"/>
</dbReference>
<dbReference type="InterPro" id="IPR035595">
    <property type="entry name" value="UDP_glycos_trans_CS"/>
</dbReference>
<dbReference type="PANTHER" id="PTHR48046">
    <property type="entry name" value="UDP-GLYCOSYLTRANSFERASE 72E1"/>
    <property type="match status" value="1"/>
</dbReference>
<dbReference type="PANTHER" id="PTHR48046:SF5">
    <property type="entry name" value="UDP-GLYCOSYLTRANSFERASE 72E2-RELATED"/>
    <property type="match status" value="1"/>
</dbReference>
<dbReference type="Pfam" id="PF00201">
    <property type="entry name" value="UDPGT"/>
    <property type="match status" value="1"/>
</dbReference>
<dbReference type="SUPFAM" id="SSF53756">
    <property type="entry name" value="UDP-Glycosyltransferase/glycogen phosphorylase"/>
    <property type="match status" value="1"/>
</dbReference>
<dbReference type="PROSITE" id="PS00375">
    <property type="entry name" value="UDPGT"/>
    <property type="match status" value="1"/>
</dbReference>
<keyword id="KW-0328">Glycosyltransferase</keyword>
<keyword id="KW-1185">Reference proteome</keyword>
<keyword id="KW-0808">Transferase</keyword>
<organism>
    <name type="scientific">Arabidopsis thaliana</name>
    <name type="common">Mouse-ear cress</name>
    <dbReference type="NCBI Taxonomy" id="3702"/>
    <lineage>
        <taxon>Eukaryota</taxon>
        <taxon>Viridiplantae</taxon>
        <taxon>Streptophyta</taxon>
        <taxon>Embryophyta</taxon>
        <taxon>Tracheophyta</taxon>
        <taxon>Spermatophyta</taxon>
        <taxon>Magnoliopsida</taxon>
        <taxon>eudicotyledons</taxon>
        <taxon>Gunneridae</taxon>
        <taxon>Pentapetalae</taxon>
        <taxon>rosids</taxon>
        <taxon>malvids</taxon>
        <taxon>Brassicales</taxon>
        <taxon>Brassicaceae</taxon>
        <taxon>Camelineae</taxon>
        <taxon>Arabidopsis</taxon>
    </lineage>
</organism>
<name>U72E3_ARATH</name>
<gene>
    <name evidence="7" type="primary">UGT72E3</name>
    <name evidence="9" type="ordered locus">At5g26310</name>
    <name evidence="10" type="ORF">F9D12.4</name>
</gene>
<feature type="chain" id="PRO_0000409075" description="UDP-glycosyltransferase 72E3">
    <location>
        <begin position="1"/>
        <end position="481"/>
    </location>
</feature>
<feature type="active site" description="Proton acceptor" evidence="1">
    <location>
        <position position="18"/>
    </location>
</feature>
<feature type="active site" description="Charge relay" evidence="1">
    <location>
        <position position="111"/>
    </location>
</feature>
<feature type="binding site" evidence="2">
    <location>
        <position position="18"/>
    </location>
    <ligand>
        <name>an anthocyanidin</name>
        <dbReference type="ChEBI" id="CHEBI:143576"/>
    </ligand>
</feature>
<feature type="binding site" evidence="1">
    <location>
        <position position="346"/>
    </location>
    <ligand>
        <name>UDP-alpha-D-glucose</name>
        <dbReference type="ChEBI" id="CHEBI:58885"/>
    </ligand>
</feature>
<feature type="binding site" evidence="1">
    <location>
        <position position="348"/>
    </location>
    <ligand>
        <name>UDP-alpha-D-glucose</name>
        <dbReference type="ChEBI" id="CHEBI:58885"/>
    </ligand>
</feature>
<feature type="binding site" evidence="1">
    <location>
        <position position="363"/>
    </location>
    <ligand>
        <name>UDP-alpha-D-glucose</name>
        <dbReference type="ChEBI" id="CHEBI:58885"/>
    </ligand>
</feature>
<feature type="binding site" evidence="1">
    <location>
        <position position="366"/>
    </location>
    <ligand>
        <name>UDP-alpha-D-glucose</name>
        <dbReference type="ChEBI" id="CHEBI:58885"/>
    </ligand>
</feature>
<feature type="binding site" evidence="1">
    <location>
        <position position="368"/>
    </location>
    <ligand>
        <name>UDP-alpha-D-glucose</name>
        <dbReference type="ChEBI" id="CHEBI:58885"/>
    </ligand>
</feature>
<feature type="binding site" evidence="1">
    <location>
        <position position="371"/>
    </location>
    <ligand>
        <name>UDP-alpha-D-glucose</name>
        <dbReference type="ChEBI" id="CHEBI:58885"/>
    </ligand>
</feature>
<feature type="binding site" evidence="2">
    <location>
        <position position="386"/>
    </location>
    <ligand>
        <name>an anthocyanidin</name>
        <dbReference type="ChEBI" id="CHEBI:143576"/>
    </ligand>
</feature>
<feature type="binding site" evidence="1">
    <location>
        <position position="387"/>
    </location>
    <ligand>
        <name>UDP-alpha-D-glucose</name>
        <dbReference type="ChEBI" id="CHEBI:58885"/>
    </ligand>
</feature>
<feature type="binding site" evidence="1">
    <location>
        <position position="388"/>
    </location>
    <ligand>
        <name>UDP-alpha-D-glucose</name>
        <dbReference type="ChEBI" id="CHEBI:58885"/>
    </ligand>
</feature>
<comment type="function">
    <text evidence="3 4 6">Involved in the O-glucosylation of monolignols (alcohol monomers of lignin) (PubMed:11042211, PubMed:15907484, PubMed:24667164). Glucosylates coniferyl alcohol to form coniferyl alcohol 4-O-glucoside (PubMed:15907484, PubMed:24667164). Glucosylates sinapyl alcohol to form sinapyl alcohol 4-O-glucoside (PubMed:11042211, PubMed:15907484, PubMed:24667164). Possesses low activity with sinapate as substrate (PubMed:11042211, PubMed:15907484).</text>
</comment>
<comment type="catalytic activity">
    <reaction evidence="3 4 6">
        <text>(E)-4-coumarate + UDP-alpha-D-glucose = 4-O-(beta-D-glucosyl)-trans-4-coumarate + UDP + H(+)</text>
        <dbReference type="Rhea" id="RHEA:21636"/>
        <dbReference type="ChEBI" id="CHEBI:12876"/>
        <dbReference type="ChEBI" id="CHEBI:15378"/>
        <dbReference type="ChEBI" id="CHEBI:58223"/>
        <dbReference type="ChEBI" id="CHEBI:58885"/>
        <dbReference type="ChEBI" id="CHEBI:79066"/>
        <dbReference type="EC" id="2.4.1.126"/>
    </reaction>
</comment>
<comment type="catalytic activity">
    <reaction evidence="3 4 6">
        <text>(E)-sinapyl alcohol + UDP-alpha-D-glucose = 4-O-(beta-D-glucosyl)-trans-4-sinapoyl alcohol + UDP + H(+)</text>
        <dbReference type="Rhea" id="RHEA:57460"/>
        <dbReference type="ChEBI" id="CHEBI:9380"/>
        <dbReference type="ChEBI" id="CHEBI:15378"/>
        <dbReference type="ChEBI" id="CHEBI:58223"/>
        <dbReference type="ChEBI" id="CHEBI:58885"/>
        <dbReference type="ChEBI" id="CHEBI:64557"/>
    </reaction>
</comment>
<comment type="catalytic activity">
    <reaction evidence="4 6">
        <text>(E)-coniferol + UDP-alpha-D-glucose = 4-O-(beta-D-glucosyl)-(E)-coniferol + UDP + H(+)</text>
        <dbReference type="Rhea" id="RHEA:23944"/>
        <dbReference type="ChEBI" id="CHEBI:15378"/>
        <dbReference type="ChEBI" id="CHEBI:16220"/>
        <dbReference type="ChEBI" id="CHEBI:17745"/>
        <dbReference type="ChEBI" id="CHEBI:58223"/>
        <dbReference type="ChEBI" id="CHEBI:58885"/>
        <dbReference type="EC" id="2.4.1.111"/>
    </reaction>
</comment>
<comment type="catalytic activity">
    <reaction evidence="3 4">
        <text>(E)-sinapate + UDP-alpha-D-glucose = 4-O-(beta-D-glucosyl)-trans-sinapate + UDP + H(+)</text>
        <dbReference type="Rhea" id="RHEA:57456"/>
        <dbReference type="ChEBI" id="CHEBI:15378"/>
        <dbReference type="ChEBI" id="CHEBI:30023"/>
        <dbReference type="ChEBI" id="CHEBI:58223"/>
        <dbReference type="ChEBI" id="CHEBI:58885"/>
        <dbReference type="ChEBI" id="CHEBI:141763"/>
    </reaction>
</comment>
<comment type="catalytic activity">
    <reaction evidence="4">
        <text>(E)-coniferaldehyde + UDP-alpha-D-glucose = 4-O-(beta-D-glucosyl)-4-(E)-coniferyl aldehyde + UDP + H(+)</text>
        <dbReference type="Rhea" id="RHEA:57708"/>
        <dbReference type="ChEBI" id="CHEBI:15378"/>
        <dbReference type="ChEBI" id="CHEBI:16547"/>
        <dbReference type="ChEBI" id="CHEBI:58223"/>
        <dbReference type="ChEBI" id="CHEBI:58885"/>
        <dbReference type="ChEBI" id="CHEBI:136949"/>
    </reaction>
</comment>
<comment type="catalytic activity">
    <reaction evidence="4">
        <text>(E)-sinapaldehyde + UDP-alpha-D-glucose = 4-O-(beta-D-glucosyl)-4-trans-sinapoyl aldehyde + UDP + H(+)</text>
        <dbReference type="Rhea" id="RHEA:57712"/>
        <dbReference type="ChEBI" id="CHEBI:15378"/>
        <dbReference type="ChEBI" id="CHEBI:27949"/>
        <dbReference type="ChEBI" id="CHEBI:58223"/>
        <dbReference type="ChEBI" id="CHEBI:58885"/>
        <dbReference type="ChEBI" id="CHEBI:142126"/>
    </reaction>
</comment>
<comment type="biophysicochemical properties">
    <kinetics>
        <KM evidence="3">180 uM for sinapate</KM>
        <KM evidence="3">850 uM for sinapyl alcohol</KM>
    </kinetics>
</comment>
<comment type="tissue specificity">
    <text evidence="5">Expressed in seedlings and roots, and at lower levels in flowers and siliques.</text>
</comment>
<comment type="similarity">
    <text evidence="8">Belongs to the UDP-glycosyltransferase family.</text>
</comment>
<proteinExistence type="evidence at protein level"/>
<accession>O81498</accession>
<reference key="1">
    <citation type="journal article" date="2000" name="Nature">
        <title>Sequence and analysis of chromosome 5 of the plant Arabidopsis thaliana.</title>
        <authorList>
            <person name="Tabata S."/>
            <person name="Kaneko T."/>
            <person name="Nakamura Y."/>
            <person name="Kotani H."/>
            <person name="Kato T."/>
            <person name="Asamizu E."/>
            <person name="Miyajima N."/>
            <person name="Sasamoto S."/>
            <person name="Kimura T."/>
            <person name="Hosouchi T."/>
            <person name="Kawashima K."/>
            <person name="Kohara M."/>
            <person name="Matsumoto M."/>
            <person name="Matsuno A."/>
            <person name="Muraki A."/>
            <person name="Nakayama S."/>
            <person name="Nakazaki N."/>
            <person name="Naruo K."/>
            <person name="Okumura S."/>
            <person name="Shinpo S."/>
            <person name="Takeuchi C."/>
            <person name="Wada T."/>
            <person name="Watanabe A."/>
            <person name="Yamada M."/>
            <person name="Yasuda M."/>
            <person name="Sato S."/>
            <person name="de la Bastide M."/>
            <person name="Huang E."/>
            <person name="Spiegel L."/>
            <person name="Gnoj L."/>
            <person name="O'Shaughnessy A."/>
            <person name="Preston R."/>
            <person name="Habermann K."/>
            <person name="Murray J."/>
            <person name="Johnson D."/>
            <person name="Rohlfing T."/>
            <person name="Nelson J."/>
            <person name="Stoneking T."/>
            <person name="Pepin K."/>
            <person name="Spieth J."/>
            <person name="Sekhon M."/>
            <person name="Armstrong J."/>
            <person name="Becker M."/>
            <person name="Belter E."/>
            <person name="Cordum H."/>
            <person name="Cordes M."/>
            <person name="Courtney L."/>
            <person name="Courtney W."/>
            <person name="Dante M."/>
            <person name="Du H."/>
            <person name="Edwards J."/>
            <person name="Fryman J."/>
            <person name="Haakensen B."/>
            <person name="Lamar E."/>
            <person name="Latreille P."/>
            <person name="Leonard S."/>
            <person name="Meyer R."/>
            <person name="Mulvaney E."/>
            <person name="Ozersky P."/>
            <person name="Riley A."/>
            <person name="Strowmatt C."/>
            <person name="Wagner-McPherson C."/>
            <person name="Wollam A."/>
            <person name="Yoakum M."/>
            <person name="Bell M."/>
            <person name="Dedhia N."/>
            <person name="Parnell L."/>
            <person name="Shah R."/>
            <person name="Rodriguez M."/>
            <person name="Hoon See L."/>
            <person name="Vil D."/>
            <person name="Baker J."/>
            <person name="Kirchoff K."/>
            <person name="Toth K."/>
            <person name="King L."/>
            <person name="Bahret A."/>
            <person name="Miller B."/>
            <person name="Marra M.A."/>
            <person name="Martienssen R."/>
            <person name="McCombie W.R."/>
            <person name="Wilson R.K."/>
            <person name="Murphy G."/>
            <person name="Bancroft I."/>
            <person name="Volckaert G."/>
            <person name="Wambutt R."/>
            <person name="Duesterhoeft A."/>
            <person name="Stiekema W."/>
            <person name="Pohl T."/>
            <person name="Entian K.-D."/>
            <person name="Terryn N."/>
            <person name="Hartley N."/>
            <person name="Bent E."/>
            <person name="Johnson S."/>
            <person name="Langham S.-A."/>
            <person name="McCullagh B."/>
            <person name="Robben J."/>
            <person name="Grymonprez B."/>
            <person name="Zimmermann W."/>
            <person name="Ramsperger U."/>
            <person name="Wedler H."/>
            <person name="Balke K."/>
            <person name="Wedler E."/>
            <person name="Peters S."/>
            <person name="van Staveren M."/>
            <person name="Dirkse W."/>
            <person name="Mooijman P."/>
            <person name="Klein Lankhorst R."/>
            <person name="Weitzenegger T."/>
            <person name="Bothe G."/>
            <person name="Rose M."/>
            <person name="Hauf J."/>
            <person name="Berneiser S."/>
            <person name="Hempel S."/>
            <person name="Feldpausch M."/>
            <person name="Lamberth S."/>
            <person name="Villarroel R."/>
            <person name="Gielen J."/>
            <person name="Ardiles W."/>
            <person name="Bents O."/>
            <person name="Lemcke K."/>
            <person name="Kolesov G."/>
            <person name="Mayer K.F.X."/>
            <person name="Rudd S."/>
            <person name="Schoof H."/>
            <person name="Schueller C."/>
            <person name="Zaccaria P."/>
            <person name="Mewes H.-W."/>
            <person name="Bevan M."/>
            <person name="Fransz P.F."/>
        </authorList>
    </citation>
    <scope>NUCLEOTIDE SEQUENCE [LARGE SCALE GENOMIC DNA]</scope>
    <source>
        <strain>cv. Columbia</strain>
    </source>
</reference>
<reference key="2">
    <citation type="journal article" date="2017" name="Plant J.">
        <title>Araport11: a complete reannotation of the Arabidopsis thaliana reference genome.</title>
        <authorList>
            <person name="Cheng C.Y."/>
            <person name="Krishnakumar V."/>
            <person name="Chan A.P."/>
            <person name="Thibaud-Nissen F."/>
            <person name="Schobel S."/>
            <person name="Town C.D."/>
        </authorList>
    </citation>
    <scope>GENOME REANNOTATION</scope>
    <source>
        <strain>cv. Columbia</strain>
    </source>
</reference>
<reference key="3">
    <citation type="submission" date="2007-03" db="EMBL/GenBank/DDBJ databases">
        <title>Arabidopsis ORF clones.</title>
        <authorList>
            <person name="Bautista V.R."/>
            <person name="Kim C.J."/>
            <person name="Chen H."/>
            <person name="Wu S.Y."/>
            <person name="De Los Reyes C."/>
            <person name="Ecker J.R."/>
        </authorList>
    </citation>
    <scope>NUCLEOTIDE SEQUENCE [LARGE SCALE MRNA]</scope>
    <source>
        <strain>cv. Columbia</strain>
    </source>
</reference>
<reference key="4">
    <citation type="journal article" date="2001" name="J. Biol. Chem.">
        <title>Phylogenetic analysis of the UDP-glycosyltransferase multigene family of Arabidopsis thaliana.</title>
        <authorList>
            <person name="Li Y."/>
            <person name="Baldauf S."/>
            <person name="Lim E.K."/>
            <person name="Bowles D.J."/>
        </authorList>
    </citation>
    <scope>GENE FAMILY</scope>
</reference>
<reference key="5">
    <citation type="journal article" date="2001" name="J. Biol. Chem.">
        <title>Identification of glucosyltransferase genes involved in sinapate metabolism and lignin synthesis in Arabidopsis.</title>
        <authorList>
            <person name="Lim E.K."/>
            <person name="Li Y."/>
            <person name="Parr A."/>
            <person name="Jackson R."/>
            <person name="Ashford D.A."/>
            <person name="Bowles D.J."/>
        </authorList>
    </citation>
    <scope>FUNCTION</scope>
    <scope>CATALYTIC ACTIVITY</scope>
    <scope>BIOPHYSICOCHEMICAL PROPERTIES</scope>
</reference>
<reference key="6">
    <citation type="journal article" date="2005" name="FEBS Lett.">
        <title>Identification and characterisation of Arabidopsis glycosyltransferases capable of glucosylating coniferyl aldehyde and sinapyl aldehyde.</title>
        <authorList>
            <person name="Lim E.K."/>
            <person name="Jackson R.G."/>
            <person name="Bowles D.J."/>
        </authorList>
    </citation>
    <scope>FUNCTION</scope>
    <scope>CATALYTIC ACTIVITY</scope>
</reference>
<reference key="7">
    <citation type="journal article" date="2006" name="Plant J.">
        <title>The glucosyltransferase UGT72E2 is responsible for monolignol 4-O-glucoside production in Arabidopsis thaliana.</title>
        <authorList>
            <person name="Lanot A."/>
            <person name="Hodge D."/>
            <person name="Jackson R.G."/>
            <person name="George G.L."/>
            <person name="Elias L."/>
            <person name="Lim E.K."/>
            <person name="Vaistij F.E."/>
            <person name="Bowles D.J."/>
        </authorList>
    </citation>
    <scope>TISSUE SPECIFICITY</scope>
</reference>
<reference key="8">
    <citation type="journal article" date="2014" name="Phytochemistry">
        <title>Enzymatic and metabolic engineering for efficient production of syringin, sinapyl alcohol 4-O-glucoside, in Arabidopsis thaliana.</title>
        <authorList>
            <person name="Chu Y."/>
            <person name="Kwon T."/>
            <person name="Nam J."/>
        </authorList>
    </citation>
    <scope>FUNCTION</scope>
    <scope>CATALYTIC ACTIVITY</scope>
</reference>